<organism>
    <name type="scientific">Burkholderia ambifaria (strain MC40-6)</name>
    <dbReference type="NCBI Taxonomy" id="398577"/>
    <lineage>
        <taxon>Bacteria</taxon>
        <taxon>Pseudomonadati</taxon>
        <taxon>Pseudomonadota</taxon>
        <taxon>Betaproteobacteria</taxon>
        <taxon>Burkholderiales</taxon>
        <taxon>Burkholderiaceae</taxon>
        <taxon>Burkholderia</taxon>
        <taxon>Burkholderia cepacia complex</taxon>
    </lineage>
</organism>
<reference key="1">
    <citation type="submission" date="2008-04" db="EMBL/GenBank/DDBJ databases">
        <title>Complete sequence of chromosome 1 of Burkholderia ambifaria MC40-6.</title>
        <authorList>
            <person name="Copeland A."/>
            <person name="Lucas S."/>
            <person name="Lapidus A."/>
            <person name="Glavina del Rio T."/>
            <person name="Dalin E."/>
            <person name="Tice H."/>
            <person name="Pitluck S."/>
            <person name="Chain P."/>
            <person name="Malfatti S."/>
            <person name="Shin M."/>
            <person name="Vergez L."/>
            <person name="Lang D."/>
            <person name="Schmutz J."/>
            <person name="Larimer F."/>
            <person name="Land M."/>
            <person name="Hauser L."/>
            <person name="Kyrpides N."/>
            <person name="Lykidis A."/>
            <person name="Ramette A."/>
            <person name="Konstantinidis K."/>
            <person name="Tiedje J."/>
            <person name="Richardson P."/>
        </authorList>
    </citation>
    <scope>NUCLEOTIDE SEQUENCE [LARGE SCALE GENOMIC DNA]</scope>
    <source>
        <strain>MC40-6</strain>
    </source>
</reference>
<keyword id="KW-0963">Cytoplasm</keyword>
<keyword id="KW-0489">Methyltransferase</keyword>
<keyword id="KW-0949">S-adenosyl-L-methionine</keyword>
<keyword id="KW-0808">Transferase</keyword>
<keyword id="KW-0819">tRNA processing</keyword>
<dbReference type="EC" id="2.1.1.228" evidence="1"/>
<dbReference type="EMBL" id="CP001025">
    <property type="protein sequence ID" value="ACB63442.1"/>
    <property type="molecule type" value="Genomic_DNA"/>
</dbReference>
<dbReference type="RefSeq" id="WP_012363364.1">
    <property type="nucleotide sequence ID" value="NC_010551.1"/>
</dbReference>
<dbReference type="SMR" id="B1YV59"/>
<dbReference type="KEGG" id="bac:BamMC406_0951"/>
<dbReference type="HOGENOM" id="CLU_047363_0_2_4"/>
<dbReference type="OrthoDB" id="9807416at2"/>
<dbReference type="Proteomes" id="UP000001680">
    <property type="component" value="Chromosome 1"/>
</dbReference>
<dbReference type="GO" id="GO:0005829">
    <property type="term" value="C:cytosol"/>
    <property type="evidence" value="ECO:0007669"/>
    <property type="project" value="TreeGrafter"/>
</dbReference>
<dbReference type="GO" id="GO:0052906">
    <property type="term" value="F:tRNA (guanine(37)-N1)-methyltransferase activity"/>
    <property type="evidence" value="ECO:0007669"/>
    <property type="project" value="UniProtKB-UniRule"/>
</dbReference>
<dbReference type="GO" id="GO:0002939">
    <property type="term" value="P:tRNA N1-guanine methylation"/>
    <property type="evidence" value="ECO:0007669"/>
    <property type="project" value="TreeGrafter"/>
</dbReference>
<dbReference type="CDD" id="cd18080">
    <property type="entry name" value="TrmD-like"/>
    <property type="match status" value="1"/>
</dbReference>
<dbReference type="FunFam" id="1.10.1270.20:FF:000001">
    <property type="entry name" value="tRNA (guanine-N(1)-)-methyltransferase"/>
    <property type="match status" value="1"/>
</dbReference>
<dbReference type="FunFam" id="3.40.1280.10:FF:000001">
    <property type="entry name" value="tRNA (guanine-N(1)-)-methyltransferase"/>
    <property type="match status" value="1"/>
</dbReference>
<dbReference type="Gene3D" id="3.40.1280.10">
    <property type="match status" value="1"/>
</dbReference>
<dbReference type="Gene3D" id="1.10.1270.20">
    <property type="entry name" value="tRNA(m1g37)methyltransferase, domain 2"/>
    <property type="match status" value="1"/>
</dbReference>
<dbReference type="HAMAP" id="MF_00605">
    <property type="entry name" value="TrmD"/>
    <property type="match status" value="1"/>
</dbReference>
<dbReference type="InterPro" id="IPR029028">
    <property type="entry name" value="Alpha/beta_knot_MTases"/>
</dbReference>
<dbReference type="InterPro" id="IPR023148">
    <property type="entry name" value="tRNA_m1G_MeTrfase_C_sf"/>
</dbReference>
<dbReference type="InterPro" id="IPR002649">
    <property type="entry name" value="tRNA_m1G_MeTrfase_TrmD"/>
</dbReference>
<dbReference type="InterPro" id="IPR029026">
    <property type="entry name" value="tRNA_m1G_MTases_N"/>
</dbReference>
<dbReference type="InterPro" id="IPR016009">
    <property type="entry name" value="tRNA_MeTrfase_TRMD/TRM10"/>
</dbReference>
<dbReference type="NCBIfam" id="NF000648">
    <property type="entry name" value="PRK00026.1"/>
    <property type="match status" value="1"/>
</dbReference>
<dbReference type="NCBIfam" id="TIGR00088">
    <property type="entry name" value="trmD"/>
    <property type="match status" value="1"/>
</dbReference>
<dbReference type="PANTHER" id="PTHR46417">
    <property type="entry name" value="TRNA (GUANINE-N(1)-)-METHYLTRANSFERASE"/>
    <property type="match status" value="1"/>
</dbReference>
<dbReference type="PANTHER" id="PTHR46417:SF1">
    <property type="entry name" value="TRNA (GUANINE-N(1)-)-METHYLTRANSFERASE"/>
    <property type="match status" value="1"/>
</dbReference>
<dbReference type="Pfam" id="PF01746">
    <property type="entry name" value="tRNA_m1G_MT"/>
    <property type="match status" value="1"/>
</dbReference>
<dbReference type="PIRSF" id="PIRSF000386">
    <property type="entry name" value="tRNA_mtase"/>
    <property type="match status" value="1"/>
</dbReference>
<dbReference type="SUPFAM" id="SSF75217">
    <property type="entry name" value="alpha/beta knot"/>
    <property type="match status" value="1"/>
</dbReference>
<proteinExistence type="inferred from homology"/>
<evidence type="ECO:0000255" key="1">
    <source>
        <dbReference type="HAMAP-Rule" id="MF_00605"/>
    </source>
</evidence>
<feature type="chain" id="PRO_1000130141" description="tRNA (guanine-N(1)-)-methyltransferase">
    <location>
        <begin position="1"/>
        <end position="264"/>
    </location>
</feature>
<feature type="binding site" evidence="1">
    <location>
        <position position="125"/>
    </location>
    <ligand>
        <name>S-adenosyl-L-methionine</name>
        <dbReference type="ChEBI" id="CHEBI:59789"/>
    </ligand>
</feature>
<feature type="binding site" evidence="1">
    <location>
        <begin position="145"/>
        <end position="150"/>
    </location>
    <ligand>
        <name>S-adenosyl-L-methionine</name>
        <dbReference type="ChEBI" id="CHEBI:59789"/>
    </ligand>
</feature>
<name>TRMD_BURA4</name>
<protein>
    <recommendedName>
        <fullName evidence="1">tRNA (guanine-N(1)-)-methyltransferase</fullName>
        <ecNumber evidence="1">2.1.1.228</ecNumber>
    </recommendedName>
    <alternativeName>
        <fullName evidence="1">M1G-methyltransferase</fullName>
    </alternativeName>
    <alternativeName>
        <fullName evidence="1">tRNA [GM37] methyltransferase</fullName>
    </alternativeName>
</protein>
<accession>B1YV59</accession>
<sequence length="264" mass="29481">MNQVTESAVQFDVVTLFPEMFRALTDWGITSRAVKQERFGLRTWNPRDFTTDNYRTVDDRPYGGGPGMVMLAKPLEAAINAAKAAQAELGVASTRVVMMSPQGAPFTHERAVRMAQEPGVIVLCGRYEAIDQRLLDRCVDEEISLGDFVLSGGELPAMAMMDAVVRLLPGVLNDAQSAVQDSFVDGLLDCPHYTRPEEYEGMRVPDVLLGGHHAEIERWRRQEALKNTLRKRPDLIVRARREKLLSRADEAWLANLAREAKNAS</sequence>
<gene>
    <name evidence="1" type="primary">trmD</name>
    <name type="ordered locus">BamMC406_0951</name>
</gene>
<comment type="function">
    <text evidence="1">Specifically methylates guanosine-37 in various tRNAs.</text>
</comment>
<comment type="catalytic activity">
    <reaction evidence="1">
        <text>guanosine(37) in tRNA + S-adenosyl-L-methionine = N(1)-methylguanosine(37) in tRNA + S-adenosyl-L-homocysteine + H(+)</text>
        <dbReference type="Rhea" id="RHEA:36899"/>
        <dbReference type="Rhea" id="RHEA-COMP:10145"/>
        <dbReference type="Rhea" id="RHEA-COMP:10147"/>
        <dbReference type="ChEBI" id="CHEBI:15378"/>
        <dbReference type="ChEBI" id="CHEBI:57856"/>
        <dbReference type="ChEBI" id="CHEBI:59789"/>
        <dbReference type="ChEBI" id="CHEBI:73542"/>
        <dbReference type="ChEBI" id="CHEBI:74269"/>
        <dbReference type="EC" id="2.1.1.228"/>
    </reaction>
</comment>
<comment type="subunit">
    <text evidence="1">Homodimer.</text>
</comment>
<comment type="subcellular location">
    <subcellularLocation>
        <location evidence="1">Cytoplasm</location>
    </subcellularLocation>
</comment>
<comment type="similarity">
    <text evidence="1">Belongs to the RNA methyltransferase TrmD family.</text>
</comment>